<organism>
    <name type="scientific">Actinobacillus pleuropneumoniae serotype 7 (strain AP76)</name>
    <dbReference type="NCBI Taxonomy" id="537457"/>
    <lineage>
        <taxon>Bacteria</taxon>
        <taxon>Pseudomonadati</taxon>
        <taxon>Pseudomonadota</taxon>
        <taxon>Gammaproteobacteria</taxon>
        <taxon>Pasteurellales</taxon>
        <taxon>Pasteurellaceae</taxon>
        <taxon>Actinobacillus</taxon>
    </lineage>
</organism>
<proteinExistence type="inferred from homology"/>
<dbReference type="EMBL" id="CP001091">
    <property type="protein sequence ID" value="ACE62712.1"/>
    <property type="molecule type" value="Genomic_DNA"/>
</dbReference>
<dbReference type="RefSeq" id="WP_005599764.1">
    <property type="nucleotide sequence ID" value="NC_010939.1"/>
</dbReference>
<dbReference type="SMR" id="B3H342"/>
<dbReference type="GeneID" id="48600273"/>
<dbReference type="KEGG" id="apa:APP7_2060"/>
<dbReference type="HOGENOM" id="CLU_190949_1_1_6"/>
<dbReference type="Proteomes" id="UP000001226">
    <property type="component" value="Chromosome"/>
</dbReference>
<dbReference type="GO" id="GO:0022625">
    <property type="term" value="C:cytosolic large ribosomal subunit"/>
    <property type="evidence" value="ECO:0007669"/>
    <property type="project" value="TreeGrafter"/>
</dbReference>
<dbReference type="GO" id="GO:0003735">
    <property type="term" value="F:structural constituent of ribosome"/>
    <property type="evidence" value="ECO:0007669"/>
    <property type="project" value="InterPro"/>
</dbReference>
<dbReference type="GO" id="GO:0006412">
    <property type="term" value="P:translation"/>
    <property type="evidence" value="ECO:0007669"/>
    <property type="project" value="UniProtKB-UniRule"/>
</dbReference>
<dbReference type="FunFam" id="2.20.28.120:FF:000001">
    <property type="entry name" value="50S ribosomal protein L33"/>
    <property type="match status" value="1"/>
</dbReference>
<dbReference type="Gene3D" id="2.20.28.120">
    <property type="entry name" value="Ribosomal protein L33"/>
    <property type="match status" value="1"/>
</dbReference>
<dbReference type="HAMAP" id="MF_00294">
    <property type="entry name" value="Ribosomal_bL33"/>
    <property type="match status" value="1"/>
</dbReference>
<dbReference type="InterPro" id="IPR001705">
    <property type="entry name" value="Ribosomal_bL33"/>
</dbReference>
<dbReference type="InterPro" id="IPR018264">
    <property type="entry name" value="Ribosomal_bL33_CS"/>
</dbReference>
<dbReference type="InterPro" id="IPR038584">
    <property type="entry name" value="Ribosomal_bL33_sf"/>
</dbReference>
<dbReference type="InterPro" id="IPR011332">
    <property type="entry name" value="Ribosomal_zn-bd"/>
</dbReference>
<dbReference type="NCBIfam" id="NF001860">
    <property type="entry name" value="PRK00595.1"/>
    <property type="match status" value="1"/>
</dbReference>
<dbReference type="NCBIfam" id="TIGR01023">
    <property type="entry name" value="rpmG_bact"/>
    <property type="match status" value="1"/>
</dbReference>
<dbReference type="PANTHER" id="PTHR15238">
    <property type="entry name" value="54S RIBOSOMAL PROTEIN L39, MITOCHONDRIAL"/>
    <property type="match status" value="1"/>
</dbReference>
<dbReference type="PANTHER" id="PTHR15238:SF1">
    <property type="entry name" value="LARGE RIBOSOMAL SUBUNIT PROTEIN BL33M"/>
    <property type="match status" value="1"/>
</dbReference>
<dbReference type="Pfam" id="PF00471">
    <property type="entry name" value="Ribosomal_L33"/>
    <property type="match status" value="1"/>
</dbReference>
<dbReference type="SUPFAM" id="SSF57829">
    <property type="entry name" value="Zn-binding ribosomal proteins"/>
    <property type="match status" value="1"/>
</dbReference>
<dbReference type="PROSITE" id="PS00582">
    <property type="entry name" value="RIBOSOMAL_L33"/>
    <property type="match status" value="1"/>
</dbReference>
<accession>B3H342</accession>
<comment type="similarity">
    <text evidence="1">Belongs to the bacterial ribosomal protein bL33 family.</text>
</comment>
<protein>
    <recommendedName>
        <fullName evidence="1">Large ribosomal subunit protein bL33</fullName>
    </recommendedName>
    <alternativeName>
        <fullName evidence="2">50S ribosomal protein L33</fullName>
    </alternativeName>
</protein>
<keyword id="KW-0687">Ribonucleoprotein</keyword>
<keyword id="KW-0689">Ribosomal protein</keyword>
<sequence>MAAKGNREKIRLVSSAETGHFYTTTKNKRNMPEKMEIKKFDPVVRKHVIYKEAKIK</sequence>
<feature type="chain" id="PRO_1000115090" description="Large ribosomal subunit protein bL33">
    <location>
        <begin position="1"/>
        <end position="56"/>
    </location>
</feature>
<reference key="1">
    <citation type="submission" date="2008-06" db="EMBL/GenBank/DDBJ databases">
        <title>Genome and proteome analysis of A. pleuropneumoniae serotype 7.</title>
        <authorList>
            <person name="Linke B."/>
            <person name="Buettner F."/>
            <person name="Martinez-Arias R."/>
            <person name="Goesmann A."/>
            <person name="Baltes N."/>
            <person name="Tegetmeyer H."/>
            <person name="Singh M."/>
            <person name="Gerlach G.F."/>
        </authorList>
    </citation>
    <scope>NUCLEOTIDE SEQUENCE [LARGE SCALE GENOMIC DNA]</scope>
    <source>
        <strain>AP76</strain>
    </source>
</reference>
<evidence type="ECO:0000255" key="1">
    <source>
        <dbReference type="HAMAP-Rule" id="MF_00294"/>
    </source>
</evidence>
<evidence type="ECO:0000305" key="2"/>
<gene>
    <name evidence="1" type="primary">rpmG</name>
    <name type="ordered locus">APP7_2060</name>
</gene>
<name>RL33_ACTP7</name>